<reference key="1">
    <citation type="journal article" date="2002" name="BMC Biochem.">
        <title>Combinatorial diversity of fission yeast SCF ubiquitin ligases by homo- and heterooligomeric assemblies of the F-box proteins Pop1p and Pop2p.</title>
        <authorList>
            <person name="Seibert V."/>
            <person name="Prohl C."/>
            <person name="Schoultz I."/>
            <person name="Rhee E."/>
            <person name="Lopez R."/>
            <person name="Abderazzaq K."/>
            <person name="Zhou C."/>
            <person name="Wolf D.A."/>
        </authorList>
    </citation>
    <scope>NUCLEOTIDE SEQUENCE [MRNA]</scope>
    <scope>FUNCTION</scope>
    <scope>SUBCELLULAR LOCATION</scope>
    <scope>INTERACTION WITH POP1; POP2 AND PCUL1</scope>
</reference>
<reference key="2">
    <citation type="journal article" date="2002" name="Nature">
        <title>The genome sequence of Schizosaccharomyces pombe.</title>
        <authorList>
            <person name="Wood V."/>
            <person name="Gwilliam R."/>
            <person name="Rajandream M.A."/>
            <person name="Lyne M.H."/>
            <person name="Lyne R."/>
            <person name="Stewart A."/>
            <person name="Sgouros J.G."/>
            <person name="Peat N."/>
            <person name="Hayles J."/>
            <person name="Baker S.G."/>
            <person name="Basham D."/>
            <person name="Bowman S."/>
            <person name="Brooks K."/>
            <person name="Brown D."/>
            <person name="Brown S."/>
            <person name="Chillingworth T."/>
            <person name="Churcher C.M."/>
            <person name="Collins M."/>
            <person name="Connor R."/>
            <person name="Cronin A."/>
            <person name="Davis P."/>
            <person name="Feltwell T."/>
            <person name="Fraser A."/>
            <person name="Gentles S."/>
            <person name="Goble A."/>
            <person name="Hamlin N."/>
            <person name="Harris D.E."/>
            <person name="Hidalgo J."/>
            <person name="Hodgson G."/>
            <person name="Holroyd S."/>
            <person name="Hornsby T."/>
            <person name="Howarth S."/>
            <person name="Huckle E.J."/>
            <person name="Hunt S."/>
            <person name="Jagels K."/>
            <person name="James K.D."/>
            <person name="Jones L."/>
            <person name="Jones M."/>
            <person name="Leather S."/>
            <person name="McDonald S."/>
            <person name="McLean J."/>
            <person name="Mooney P."/>
            <person name="Moule S."/>
            <person name="Mungall K.L."/>
            <person name="Murphy L.D."/>
            <person name="Niblett D."/>
            <person name="Odell C."/>
            <person name="Oliver K."/>
            <person name="O'Neil S."/>
            <person name="Pearson D."/>
            <person name="Quail M.A."/>
            <person name="Rabbinowitsch E."/>
            <person name="Rutherford K.M."/>
            <person name="Rutter S."/>
            <person name="Saunders D."/>
            <person name="Seeger K."/>
            <person name="Sharp S."/>
            <person name="Skelton J."/>
            <person name="Simmonds M.N."/>
            <person name="Squares R."/>
            <person name="Squares S."/>
            <person name="Stevens K."/>
            <person name="Taylor K."/>
            <person name="Taylor R.G."/>
            <person name="Tivey A."/>
            <person name="Walsh S.V."/>
            <person name="Warren T."/>
            <person name="Whitehead S."/>
            <person name="Woodward J.R."/>
            <person name="Volckaert G."/>
            <person name="Aert R."/>
            <person name="Robben J."/>
            <person name="Grymonprez B."/>
            <person name="Weltjens I."/>
            <person name="Vanstreels E."/>
            <person name="Rieger M."/>
            <person name="Schaefer M."/>
            <person name="Mueller-Auer S."/>
            <person name="Gabel C."/>
            <person name="Fuchs M."/>
            <person name="Duesterhoeft A."/>
            <person name="Fritzc C."/>
            <person name="Holzer E."/>
            <person name="Moestl D."/>
            <person name="Hilbert H."/>
            <person name="Borzym K."/>
            <person name="Langer I."/>
            <person name="Beck A."/>
            <person name="Lehrach H."/>
            <person name="Reinhardt R."/>
            <person name="Pohl T.M."/>
            <person name="Eger P."/>
            <person name="Zimmermann W."/>
            <person name="Wedler H."/>
            <person name="Wambutt R."/>
            <person name="Purnelle B."/>
            <person name="Goffeau A."/>
            <person name="Cadieu E."/>
            <person name="Dreano S."/>
            <person name="Gloux S."/>
            <person name="Lelaure V."/>
            <person name="Mottier S."/>
            <person name="Galibert F."/>
            <person name="Aves S.J."/>
            <person name="Xiang Z."/>
            <person name="Hunt C."/>
            <person name="Moore K."/>
            <person name="Hurst S.M."/>
            <person name="Lucas M."/>
            <person name="Rochet M."/>
            <person name="Gaillardin C."/>
            <person name="Tallada V.A."/>
            <person name="Garzon A."/>
            <person name="Thode G."/>
            <person name="Daga R.R."/>
            <person name="Cruzado L."/>
            <person name="Jimenez J."/>
            <person name="Sanchez M."/>
            <person name="del Rey F."/>
            <person name="Benito J."/>
            <person name="Dominguez A."/>
            <person name="Revuelta J.L."/>
            <person name="Moreno S."/>
            <person name="Armstrong J."/>
            <person name="Forsburg S.L."/>
            <person name="Cerutti L."/>
            <person name="Lowe T."/>
            <person name="McCombie W.R."/>
            <person name="Paulsen I."/>
            <person name="Potashkin J."/>
            <person name="Shpakovski G.V."/>
            <person name="Ussery D."/>
            <person name="Barrell B.G."/>
            <person name="Nurse P."/>
        </authorList>
    </citation>
    <scope>NUCLEOTIDE SEQUENCE [LARGE SCALE GENOMIC DNA]</scope>
    <source>
        <strain>972 / ATCC 24843</strain>
    </source>
</reference>
<reference key="3">
    <citation type="journal article" date="2005" name="Genes Dev.">
        <title>A Rik1-associated, cullin-dependent E3 ubiquitin ligase is essential for heterochromatin formation.</title>
        <authorList>
            <person name="Horn P.J."/>
            <person name="Bastie J.-N."/>
            <person name="Peterson C.L."/>
        </authorList>
    </citation>
    <scope>PARTIAL PROTEIN SEQUENCE</scope>
    <scope>IDENTIFICATION IN THE RIK1-ASSOCIATED E3 UBIQUITIN LIGASE COMPLEX</scope>
</reference>
<reference key="4">
    <citation type="journal article" date="2003" name="Mol. Cell">
        <title>BTB/POZ domain proteins are putative substrate adaptors for cullin 3 ubiquitin ligases.</title>
        <authorList>
            <person name="Geyer R."/>
            <person name="Wee S."/>
            <person name="Anderson S."/>
            <person name="Yates J. III"/>
            <person name="Wolf D.A."/>
        </authorList>
    </citation>
    <scope>INTERACTION WITH CUL3</scope>
</reference>
<reference key="5">
    <citation type="journal article" date="2006" name="Nat. Biotechnol.">
        <title>ORFeome cloning and global analysis of protein localization in the fission yeast Schizosaccharomyces pombe.</title>
        <authorList>
            <person name="Matsuyama A."/>
            <person name="Arai R."/>
            <person name="Yashiroda Y."/>
            <person name="Shirai A."/>
            <person name="Kamata A."/>
            <person name="Sekido S."/>
            <person name="Kobayashi Y."/>
            <person name="Hashimoto A."/>
            <person name="Hamamoto M."/>
            <person name="Hiraoka Y."/>
            <person name="Horinouchi S."/>
            <person name="Yoshida M."/>
        </authorList>
    </citation>
    <scope>SUBCELLULAR LOCATION [LARGE SCALE ANALYSIS]</scope>
</reference>
<feature type="chain" id="PRO_0000056021" description="RING-box protein pip1">
    <location>
        <begin position="1"/>
        <end position="107"/>
    </location>
</feature>
<feature type="zinc finger region" description="RING-type" evidence="2">
    <location>
        <begin position="52"/>
        <end position="97"/>
    </location>
</feature>
<feature type="binding site" evidence="1">
    <location>
        <position position="41"/>
    </location>
    <ligand>
        <name>Zn(2+)</name>
        <dbReference type="ChEBI" id="CHEBI:29105"/>
        <label>1</label>
    </ligand>
</feature>
<feature type="binding site" evidence="1">
    <location>
        <position position="44"/>
    </location>
    <ligand>
        <name>Zn(2+)</name>
        <dbReference type="ChEBI" id="CHEBI:29105"/>
        <label>1</label>
    </ligand>
</feature>
<feature type="binding site" evidence="1">
    <location>
        <position position="52"/>
    </location>
    <ligand>
        <name>Zn(2+)</name>
        <dbReference type="ChEBI" id="CHEBI:29105"/>
        <label>3</label>
    </ligand>
</feature>
<feature type="binding site" evidence="1">
    <location>
        <position position="55"/>
    </location>
    <ligand>
        <name>Zn(2+)</name>
        <dbReference type="ChEBI" id="CHEBI:29105"/>
        <label>3</label>
    </ligand>
</feature>
<feature type="binding site" evidence="1">
    <location>
        <position position="67"/>
    </location>
    <ligand>
        <name>Zn(2+)</name>
        <dbReference type="ChEBI" id="CHEBI:29105"/>
        <label>3</label>
    </ligand>
</feature>
<feature type="binding site" evidence="1">
    <location>
        <position position="74"/>
    </location>
    <ligand>
        <name>Zn(2+)</name>
        <dbReference type="ChEBI" id="CHEBI:29105"/>
        <label>2</label>
    </ligand>
</feature>
<feature type="binding site" evidence="1">
    <location>
        <position position="76"/>
    </location>
    <ligand>
        <name>Zn(2+)</name>
        <dbReference type="ChEBI" id="CHEBI:29105"/>
        <label>2</label>
    </ligand>
</feature>
<feature type="binding site" evidence="1">
    <location>
        <position position="79"/>
    </location>
    <ligand>
        <name>Zn(2+)</name>
        <dbReference type="ChEBI" id="CHEBI:29105"/>
        <label>1</label>
    </ligand>
</feature>
<feature type="binding site" evidence="1">
    <location>
        <position position="81"/>
    </location>
    <ligand>
        <name>Zn(2+)</name>
        <dbReference type="ChEBI" id="CHEBI:29105"/>
        <label>3</label>
    </ligand>
</feature>
<feature type="binding site" evidence="1">
    <location>
        <position position="82"/>
    </location>
    <ligand>
        <name>Zn(2+)</name>
        <dbReference type="ChEBI" id="CHEBI:29105"/>
        <label>1</label>
    </ligand>
</feature>
<feature type="binding site" evidence="1">
    <location>
        <position position="93"/>
    </location>
    <ligand>
        <name>Zn(2+)</name>
        <dbReference type="ChEBI" id="CHEBI:29105"/>
        <label>2</label>
    </ligand>
</feature>
<feature type="binding site" evidence="1">
    <location>
        <position position="96"/>
    </location>
    <ligand>
        <name>Zn(2+)</name>
        <dbReference type="ChEBI" id="CHEBI:29105"/>
        <label>2</label>
    </ligand>
</feature>
<organism>
    <name type="scientific">Schizosaccharomyces pombe (strain 972 / ATCC 24843)</name>
    <name type="common">Fission yeast</name>
    <dbReference type="NCBI Taxonomy" id="284812"/>
    <lineage>
        <taxon>Eukaryota</taxon>
        <taxon>Fungi</taxon>
        <taxon>Dikarya</taxon>
        <taxon>Ascomycota</taxon>
        <taxon>Taphrinomycotina</taxon>
        <taxon>Schizosaccharomycetes</taxon>
        <taxon>Schizosaccharomycetales</taxon>
        <taxon>Schizosaccharomycetaceae</taxon>
        <taxon>Schizosaccharomyces</taxon>
    </lineage>
</organism>
<dbReference type="EMBL" id="AF179228">
    <property type="protein sequence ID" value="AAD54393.1"/>
    <property type="molecule type" value="mRNA"/>
</dbReference>
<dbReference type="EMBL" id="CU329670">
    <property type="protein sequence ID" value="CAB58559.1"/>
    <property type="molecule type" value="Genomic_DNA"/>
</dbReference>
<dbReference type="PIR" id="T38310">
    <property type="entry name" value="T38310"/>
</dbReference>
<dbReference type="RefSeq" id="NP_593388.1">
    <property type="nucleotide sequence ID" value="NM_001018820.2"/>
</dbReference>
<dbReference type="SMR" id="O13959"/>
<dbReference type="BioGRID" id="278387">
    <property type="interactions" value="12"/>
</dbReference>
<dbReference type="ComplexPortal" id="CPX-9241">
    <property type="entry name" value="CLR4 E3 ubiquitin ligase/methyltransferase complex"/>
</dbReference>
<dbReference type="FunCoup" id="O13959">
    <property type="interactions" value="697"/>
</dbReference>
<dbReference type="IntAct" id="O13959">
    <property type="interactions" value="9"/>
</dbReference>
<dbReference type="STRING" id="284812.O13959"/>
<dbReference type="iPTMnet" id="O13959"/>
<dbReference type="PaxDb" id="4896-SPAC23H4.18c.1"/>
<dbReference type="EnsemblFungi" id="SPAC23H4.18c.1">
    <property type="protein sequence ID" value="SPAC23H4.18c.1:pep"/>
    <property type="gene ID" value="SPAC23H4.18c"/>
</dbReference>
<dbReference type="GeneID" id="2541897"/>
<dbReference type="KEGG" id="spo:2541897"/>
<dbReference type="PomBase" id="SPAC23H4.18c"/>
<dbReference type="VEuPathDB" id="FungiDB:SPAC23H4.18c"/>
<dbReference type="eggNOG" id="KOG2930">
    <property type="taxonomic scope" value="Eukaryota"/>
</dbReference>
<dbReference type="HOGENOM" id="CLU_115512_2_1_1"/>
<dbReference type="InParanoid" id="O13959"/>
<dbReference type="OMA" id="DTCVECQ"/>
<dbReference type="PhylomeDB" id="O13959"/>
<dbReference type="Reactome" id="R-SPO-110314">
    <property type="pathway name" value="Recognition of DNA damage by PCNA-containing replication complex"/>
</dbReference>
<dbReference type="Reactome" id="R-SPO-5696395">
    <property type="pathway name" value="Formation of Incision Complex in GG-NER"/>
</dbReference>
<dbReference type="Reactome" id="R-SPO-5696400">
    <property type="pathway name" value="Dual Incision in GG-NER"/>
</dbReference>
<dbReference type="Reactome" id="R-SPO-6781823">
    <property type="pathway name" value="Formation of TC-NER Pre-Incision Complex"/>
</dbReference>
<dbReference type="Reactome" id="R-SPO-6782135">
    <property type="pathway name" value="Dual incision in TC-NER"/>
</dbReference>
<dbReference type="Reactome" id="R-SPO-6782210">
    <property type="pathway name" value="Gap-filling DNA repair synthesis and ligation in TC-NER"/>
</dbReference>
<dbReference type="Reactome" id="R-SPO-68949">
    <property type="pathway name" value="Orc1 removal from chromatin"/>
</dbReference>
<dbReference type="Reactome" id="R-SPO-8854050">
    <property type="pathway name" value="FBXL7 down-regulates AURKA during mitotic entry and in early mitosis"/>
</dbReference>
<dbReference type="Reactome" id="R-SPO-8951664">
    <property type="pathway name" value="Neddylation"/>
</dbReference>
<dbReference type="Reactome" id="R-SPO-983168">
    <property type="pathway name" value="Antigen processing: Ubiquitination &amp; Proteasome degradation"/>
</dbReference>
<dbReference type="UniPathway" id="UPA00143"/>
<dbReference type="PRO" id="PR:O13959"/>
<dbReference type="Proteomes" id="UP000002485">
    <property type="component" value="Chromosome I"/>
</dbReference>
<dbReference type="GO" id="GO:0043494">
    <property type="term" value="C:CLRC complex"/>
    <property type="evidence" value="ECO:0000314"/>
    <property type="project" value="PomBase"/>
</dbReference>
<dbReference type="GO" id="GO:0031461">
    <property type="term" value="C:cullin-RING ubiquitin ligase complex"/>
    <property type="evidence" value="ECO:0000318"/>
    <property type="project" value="GO_Central"/>
</dbReference>
<dbReference type="GO" id="GO:0005737">
    <property type="term" value="C:cytoplasm"/>
    <property type="evidence" value="ECO:0000314"/>
    <property type="project" value="PomBase"/>
</dbReference>
<dbReference type="GO" id="GO:0005829">
    <property type="term" value="C:cytosol"/>
    <property type="evidence" value="ECO:0007005"/>
    <property type="project" value="PomBase"/>
</dbReference>
<dbReference type="GO" id="GO:0043224">
    <property type="term" value="C:nuclear SCF ubiquitin ligase complex"/>
    <property type="evidence" value="ECO:0000314"/>
    <property type="project" value="PomBase"/>
</dbReference>
<dbReference type="GO" id="GO:0005634">
    <property type="term" value="C:nucleus"/>
    <property type="evidence" value="ECO:0000314"/>
    <property type="project" value="PomBase"/>
</dbReference>
<dbReference type="GO" id="GO:0097602">
    <property type="term" value="F:cullin family protein binding"/>
    <property type="evidence" value="ECO:0000318"/>
    <property type="project" value="GO_Central"/>
</dbReference>
<dbReference type="GO" id="GO:0140851">
    <property type="term" value="F:histone H3K14 ubiquitin ligase activity"/>
    <property type="evidence" value="ECO:0000314"/>
    <property type="project" value="PomBase"/>
</dbReference>
<dbReference type="GO" id="GO:0061630">
    <property type="term" value="F:ubiquitin protein ligase activity"/>
    <property type="evidence" value="ECO:0000314"/>
    <property type="project" value="PomBase"/>
</dbReference>
<dbReference type="GO" id="GO:0008270">
    <property type="term" value="F:zinc ion binding"/>
    <property type="evidence" value="ECO:0000255"/>
    <property type="project" value="PomBase"/>
</dbReference>
<dbReference type="GO" id="GO:0031507">
    <property type="term" value="P:heterochromatin formation"/>
    <property type="evidence" value="ECO:0000305"/>
    <property type="project" value="PomBase"/>
</dbReference>
<dbReference type="GO" id="GO:0016567">
    <property type="term" value="P:protein ubiquitination"/>
    <property type="evidence" value="ECO:0000318"/>
    <property type="project" value="GO_Central"/>
</dbReference>
<dbReference type="GO" id="GO:0031146">
    <property type="term" value="P:SCF-dependent proteasomal ubiquitin-dependent protein catabolic process"/>
    <property type="evidence" value="ECO:0000314"/>
    <property type="project" value="PomBase"/>
</dbReference>
<dbReference type="GO" id="GO:0006511">
    <property type="term" value="P:ubiquitin-dependent protein catabolic process"/>
    <property type="evidence" value="ECO:0000318"/>
    <property type="project" value="GO_Central"/>
</dbReference>
<dbReference type="CDD" id="cd16485">
    <property type="entry name" value="mRING-H2-C3H2C2D_RBX1"/>
    <property type="match status" value="1"/>
</dbReference>
<dbReference type="FunFam" id="3.30.40.10:FF:000010">
    <property type="entry name" value="E3 ubiquitin-protein ligase RBX1"/>
    <property type="match status" value="1"/>
</dbReference>
<dbReference type="Gene3D" id="3.30.40.10">
    <property type="entry name" value="Zinc/RING finger domain, C3HC4 (zinc finger)"/>
    <property type="match status" value="1"/>
</dbReference>
<dbReference type="InterPro" id="IPR051031">
    <property type="entry name" value="RING-box_E3_Ubiquitin_Ligase"/>
</dbReference>
<dbReference type="InterPro" id="IPR001841">
    <property type="entry name" value="Znf_RING"/>
</dbReference>
<dbReference type="InterPro" id="IPR013083">
    <property type="entry name" value="Znf_RING/FYVE/PHD"/>
</dbReference>
<dbReference type="InterPro" id="IPR024766">
    <property type="entry name" value="Znf_RING_H2"/>
</dbReference>
<dbReference type="PANTHER" id="PTHR11210">
    <property type="entry name" value="RING BOX"/>
    <property type="match status" value="1"/>
</dbReference>
<dbReference type="Pfam" id="PF12678">
    <property type="entry name" value="zf-rbx1"/>
    <property type="match status" value="1"/>
</dbReference>
<dbReference type="SUPFAM" id="SSF57850">
    <property type="entry name" value="RING/U-box"/>
    <property type="match status" value="1"/>
</dbReference>
<dbReference type="PROSITE" id="PS50089">
    <property type="entry name" value="ZF_RING_2"/>
    <property type="match status" value="1"/>
</dbReference>
<gene>
    <name type="primary">pip1</name>
    <name type="ORF">SPAC23H4.18c</name>
</gene>
<evidence type="ECO:0000250" key="1"/>
<evidence type="ECO:0000255" key="2">
    <source>
        <dbReference type="PROSITE-ProRule" id="PRU00175"/>
    </source>
</evidence>
<evidence type="ECO:0000269" key="3">
    <source>
    </source>
</evidence>
<evidence type="ECO:0000269" key="4">
    <source>
    </source>
</evidence>
<evidence type="ECO:0000269" key="5">
    <source>
    </source>
</evidence>
<comment type="function">
    <text evidence="3">Component of E3 ubiquitin ligase SCF complexes, which mediate the ubiquitination and subsequent proteasomal degradation of target proteins. Seems to recruit the E2 ubiquitination enzyme, like UBC3/CDC34, to the complex and brings it into close proximity to the substrate. Component of the rik1-associated E3 ubiquitin ligase complex that shows ubiquitin ligase activity and is required for histone H3K9 methylation. H3K9me represents a specific tag for epigenetic transcriptional repression by recruiting swi6/HP1 to methylated histones which leads to transcriptional silencing within centromeric heterochromatin, telomeric regions and at the silent mating-type loci.</text>
</comment>
<comment type="pathway">
    <text>Protein modification; protein ubiquitination.</text>
</comment>
<comment type="subunit">
    <text evidence="3 4 5">Part of a SCF E3 ubiquitin ligase complex containing psh1, pip1, pcul1 and the F-box proteins pop1 and pop2. Instead of the pop1/pop2 heterodimer also homooligomers of pop1 or pop2 may be present in the complex. Component of the rik1-associated E3 ubiquitin ligase complex composed of at least clr4, cul4, pip1, raf1 and raf2. Interacts with cul3.</text>
</comment>
<comment type="interaction">
    <interactant intactId="EBI-1112060">
        <id>O13959</id>
    </interactant>
    <interactant intactId="EBI-1172248">
        <id>Q9Y709</id>
        <label>skp1</label>
    </interactant>
    <organismsDiffer>false</organismsDiffer>
    <experiments>6</experiments>
</comment>
<comment type="subcellular location">
    <subcellularLocation>
        <location>Cytoplasm</location>
    </subcellularLocation>
    <subcellularLocation>
        <location>Nucleus</location>
    </subcellularLocation>
</comment>
<comment type="domain">
    <text>The RING-type zinc finger domain is essential for ubiquitin ligase activity. It coordinates an additional third zinc ion.</text>
</comment>
<protein>
    <recommendedName>
        <fullName>RING-box protein pip1</fullName>
        <shortName>RING-box protein 1</shortName>
    </recommendedName>
    <alternativeName>
        <fullName>Pop-interacting protein 1</fullName>
    </alternativeName>
</protein>
<proteinExistence type="evidence at protein level"/>
<keyword id="KW-0156">Chromatin regulator</keyword>
<keyword id="KW-0963">Cytoplasm</keyword>
<keyword id="KW-0903">Direct protein sequencing</keyword>
<keyword id="KW-0479">Metal-binding</keyword>
<keyword id="KW-0539">Nucleus</keyword>
<keyword id="KW-1185">Reference proteome</keyword>
<keyword id="KW-0804">Transcription</keyword>
<keyword id="KW-0805">Transcription regulation</keyword>
<keyword id="KW-0833">Ubl conjugation pathway</keyword>
<keyword id="KW-0862">Zinc</keyword>
<keyword id="KW-0863">Zinc-finger</keyword>
<sequence>MEDEMQIDKKEVEIEQKPPRFEIKKWNAVALWQWDIVVDNCAICRNHIMDLCIECQANTDSAAAQECTVAWGTCNHAFHFHCISRWLNTRNVCPLDNREWEFQRYGH</sequence>
<name>RBX1_SCHPO</name>
<accession>O13959</accession>